<feature type="chain" id="PRO_0000458381" description="MFS-type transporeter aprT">
    <location>
        <begin position="1"/>
        <end position="502"/>
    </location>
</feature>
<feature type="transmembrane region" description="Helical" evidence="1">
    <location>
        <begin position="45"/>
        <end position="65"/>
    </location>
</feature>
<feature type="transmembrane region" description="Helical" evidence="1">
    <location>
        <begin position="114"/>
        <end position="136"/>
    </location>
</feature>
<feature type="transmembrane region" description="Helical" evidence="1">
    <location>
        <begin position="150"/>
        <end position="170"/>
    </location>
</feature>
<feature type="transmembrane region" description="Helical" evidence="1">
    <location>
        <begin position="175"/>
        <end position="195"/>
    </location>
</feature>
<feature type="transmembrane region" description="Helical" evidence="1">
    <location>
        <begin position="214"/>
        <end position="234"/>
    </location>
</feature>
<feature type="transmembrane region" description="Helical" evidence="1">
    <location>
        <begin position="239"/>
        <end position="259"/>
    </location>
</feature>
<feature type="transmembrane region" description="Helical" evidence="1">
    <location>
        <begin position="302"/>
        <end position="322"/>
    </location>
</feature>
<feature type="transmembrane region" description="Helical" evidence="1">
    <location>
        <begin position="336"/>
        <end position="356"/>
    </location>
</feature>
<feature type="transmembrane region" description="Helical" evidence="1">
    <location>
        <begin position="380"/>
        <end position="400"/>
    </location>
</feature>
<feature type="transmembrane region" description="Helical" evidence="1">
    <location>
        <begin position="403"/>
        <end position="423"/>
    </location>
</feature>
<feature type="transmembrane region" description="Helical" evidence="1">
    <location>
        <begin position="464"/>
        <end position="484"/>
    </location>
</feature>
<feature type="region of interest" description="Disordered" evidence="3">
    <location>
        <begin position="1"/>
        <end position="38"/>
    </location>
</feature>
<feature type="glycosylation site" description="N-linked (GlcNAc...) asparagine" evidence="2">
    <location>
        <position position="495"/>
    </location>
</feature>
<sequence>MASPELASHHSDPSDGEGAPFLPGVDDESPESLNSDIPFQKHSNHGLIIKLFVIYLAIGMGGPMIQSPLTRIVESIACRNYWNAHDPSQLPGPEQISEGMCKIPEVQREVTTIIGYREFFNAFLTSTFALPYGLLADRYGRKLAIRLASVGFVFNSVLSFAPIWLPNIFPLRTMWFGAVGWVLGGGPVLLFALFWSMIADATADSERDTVILRFGIATVSAGFLANVTSSFVMKFDSRVPLMTGCGLLFAGLLVANLLPETLRKKSPETTISADTSVSLTSLFFRIKKTIWSYRFICYNYPVAVILPAFFVTQLAGGSAFLVQYISIRFHRTIADATLLVALQHAFTIPVLFFILPQISERLRAYISRLQSDLLLARISVMLLALGLFGIGLSSSINTLIPSLLLHAGGAGFVLIARGLITGLARREETARLYTLIEATQSIGEVTASLYITNSLNWGLGRGGLWIGLPWLIVSFLLALIALVLGILRLPPRSENASSGSTH</sequence>
<name>APRT_ASPFN</name>
<accession>B8NCQ3</accession>
<keyword id="KW-1003">Cell membrane</keyword>
<keyword id="KW-0325">Glycoprotein</keyword>
<keyword id="KW-0472">Membrane</keyword>
<keyword id="KW-0812">Transmembrane</keyword>
<keyword id="KW-1133">Transmembrane helix</keyword>
<keyword id="KW-0813">Transport</keyword>
<evidence type="ECO:0000255" key="1"/>
<evidence type="ECO:0000255" key="2">
    <source>
        <dbReference type="PROSITE-ProRule" id="PRU00498"/>
    </source>
</evidence>
<evidence type="ECO:0000256" key="3">
    <source>
        <dbReference type="SAM" id="MobiDB-lite"/>
    </source>
</evidence>
<evidence type="ECO:0000269" key="4">
    <source>
    </source>
</evidence>
<evidence type="ECO:0000303" key="5">
    <source>
    </source>
</evidence>
<evidence type="ECO:0000305" key="6"/>
<evidence type="ECO:0000305" key="7">
    <source>
    </source>
</evidence>
<proteinExistence type="inferred from homology"/>
<dbReference type="EMBL" id="EQ963476">
    <property type="protein sequence ID" value="EED52436.1"/>
    <property type="molecule type" value="Genomic_DNA"/>
</dbReference>
<dbReference type="EMBL" id="CP059872">
    <property type="protein sequence ID" value="QMW35051.1"/>
    <property type="molecule type" value="Genomic_DNA"/>
</dbReference>
<dbReference type="RefSeq" id="XP_002377600.1">
    <property type="nucleotide sequence ID" value="XM_002377559.1"/>
</dbReference>
<dbReference type="SMR" id="B8NCQ3"/>
<dbReference type="EnsemblFungi" id="EED52436">
    <property type="protein sequence ID" value="EED52436"/>
    <property type="gene ID" value="AFLA_041380"/>
</dbReference>
<dbReference type="VEuPathDB" id="FungiDB:AFLA_007702"/>
<dbReference type="eggNOG" id="ENOG502QWBF">
    <property type="taxonomic scope" value="Eukaryota"/>
</dbReference>
<dbReference type="HOGENOM" id="CLU_013756_2_1_1"/>
<dbReference type="OMA" id="HRKFYAE"/>
<dbReference type="GO" id="GO:0005886">
    <property type="term" value="C:plasma membrane"/>
    <property type="evidence" value="ECO:0007669"/>
    <property type="project" value="UniProtKB-SubCell"/>
</dbReference>
<dbReference type="GO" id="GO:0022857">
    <property type="term" value="F:transmembrane transporter activity"/>
    <property type="evidence" value="ECO:0007669"/>
    <property type="project" value="TreeGrafter"/>
</dbReference>
<dbReference type="CDD" id="cd06174">
    <property type="entry name" value="MFS"/>
    <property type="match status" value="1"/>
</dbReference>
<dbReference type="Gene3D" id="1.20.1250.20">
    <property type="entry name" value="MFS general substrate transporter like domains"/>
    <property type="match status" value="1"/>
</dbReference>
<dbReference type="InterPro" id="IPR036259">
    <property type="entry name" value="MFS_trans_sf"/>
</dbReference>
<dbReference type="PANTHER" id="PTHR23507:SF31">
    <property type="entry name" value="TRANSPORTER, PUTATIVE (AFU_ORTHOLOGUE AFUA_2G14230)-RELATED"/>
    <property type="match status" value="1"/>
</dbReference>
<dbReference type="PANTHER" id="PTHR23507">
    <property type="entry name" value="ZGC:174356"/>
    <property type="match status" value="1"/>
</dbReference>
<dbReference type="SUPFAM" id="SSF103473">
    <property type="entry name" value="MFS general substrate transporter"/>
    <property type="match status" value="1"/>
</dbReference>
<reference key="1">
    <citation type="journal article" date="2015" name="Genome Announc.">
        <title>Genome sequence of Aspergillus flavus NRRL 3357, a strain that causes aflatoxin contamination of food and feed.</title>
        <authorList>
            <person name="Nierman W.C."/>
            <person name="Yu J."/>
            <person name="Fedorova-Abrams N.D."/>
            <person name="Losada L."/>
            <person name="Cleveland T.E."/>
            <person name="Bhatnagar D."/>
            <person name="Bennett J.W."/>
            <person name="Dean R."/>
            <person name="Payne G.A."/>
        </authorList>
    </citation>
    <scope>NUCLEOTIDE SEQUENCE [LARGE SCALE GENOMIC DNA]</scope>
    <source>
        <strain>ATCC 200026 / FGSC A1120 / IAM 13836 / NRRL 3357 / JCM 12722 / SRRC 167</strain>
    </source>
</reference>
<reference key="2">
    <citation type="submission" date="2020-07" db="EMBL/GenBank/DDBJ databases">
        <title>Two New Chromosome-Level Aspergillus flavus Reference Genomes Reveal a Large Insertion Potentially Contributing to Isolate Stress Tolerance and Aflatoxin Production.</title>
        <authorList>
            <person name="Fountain J.C."/>
            <person name="Clevenger J.P."/>
            <person name="Nadon B."/>
            <person name="Youngblood R.C."/>
            <person name="Korani W."/>
            <person name="Chang P.-K."/>
            <person name="Starr D."/>
            <person name="Wang H."/>
            <person name="Isett B."/>
            <person name="Johnston H.R."/>
            <person name="Wiggins R."/>
            <person name="Chu Y."/>
            <person name="Agarwal G."/>
            <person name="Kemerait R.C."/>
            <person name="Pandey M.K."/>
            <person name="Bhatnagar D."/>
            <person name="Ozias-Akins P."/>
            <person name="Varshney R.K."/>
            <person name="Scheffler B.E."/>
            <person name="Vaughn J.N."/>
            <person name="Guo B."/>
        </authorList>
    </citation>
    <scope>NUCLEOTIDE SEQUENCE [LARGE SCALE GENOMIC DNA]</scope>
    <source>
        <strain>ATCC 200026 / FGSC A1120 / IAM 13836 / NRRL 3357 / JCM 12722 / SRRC 167</strain>
    </source>
</reference>
<reference key="3">
    <citation type="journal article" date="2018" name="Org. Biomol. Chem.">
        <title>Heterologous production of asperipin-2a: proposal for sequential oxidative macrocyclization by a fungi-specific DUF3328 oxidase.</title>
        <authorList>
            <person name="Ye Y."/>
            <person name="Ozaki T."/>
            <person name="Umemura M."/>
            <person name="Liu C."/>
            <person name="Minami A."/>
            <person name="Oikawa H."/>
        </authorList>
    </citation>
    <scope>FUNCTION</scope>
</reference>
<gene>
    <name evidence="5" type="primary">aprT</name>
    <name type="ORF">AFLA_041380</name>
    <name type="ORF">G4B84_010542</name>
</gene>
<protein>
    <recommendedName>
        <fullName evidence="5">MFS-type transporeter aprT</fullName>
    </recommendedName>
    <alternativeName>
        <fullName evidence="5">Asperipin-2a biosynthesis cluster protein T</fullName>
    </alternativeName>
</protein>
<organism>
    <name type="scientific">Aspergillus flavus (strain ATCC 200026 / FGSC A1120 / IAM 13836 / NRRL 3357 / JCM 12722 / SRRC 167)</name>
    <dbReference type="NCBI Taxonomy" id="332952"/>
    <lineage>
        <taxon>Eukaryota</taxon>
        <taxon>Fungi</taxon>
        <taxon>Dikarya</taxon>
        <taxon>Ascomycota</taxon>
        <taxon>Pezizomycotina</taxon>
        <taxon>Eurotiomycetes</taxon>
        <taxon>Eurotiomycetidae</taxon>
        <taxon>Eurotiales</taxon>
        <taxon>Aspergillaceae</taxon>
        <taxon>Aspergillus</taxon>
        <taxon>Aspergillus subgen. Circumdati</taxon>
    </lineage>
</organism>
<comment type="function">
    <text evidence="4 7">MFS-rype transporer; part of the gene cluster that mediates the biosynthesis of the asperipin-2a, a bicyclic peptide that possesses two macrocyclic ether rings consisting of 14- and 17-membered paracyclophans (PubMed:30516224). AprT is likely to be involved in the cellular export of asperipin-2a (Probable).</text>
</comment>
<comment type="subcellular location">
    <subcellularLocation>
        <location evidence="7">Cell membrane</location>
        <topology evidence="1">Multi-pass membrane protein</topology>
    </subcellularLocation>
</comment>
<comment type="similarity">
    <text evidence="6">Belongs to the major facilitator superfamily.</text>
</comment>